<accession>P43824</accession>
<feature type="chain" id="PRO_0000098395" description="Isoleucine--tRNA ligase">
    <location>
        <begin position="1"/>
        <end position="941"/>
    </location>
</feature>
<feature type="short sequence motif" description="'HIGH' region">
    <location>
        <begin position="59"/>
        <end position="69"/>
    </location>
</feature>
<feature type="short sequence motif" description="'KMSKS' region">
    <location>
        <begin position="603"/>
        <end position="607"/>
    </location>
</feature>
<feature type="binding site" evidence="1">
    <location>
        <position position="562"/>
    </location>
    <ligand>
        <name>L-isoleucyl-5'-AMP</name>
        <dbReference type="ChEBI" id="CHEBI:178002"/>
    </ligand>
</feature>
<feature type="binding site" evidence="1">
    <location>
        <position position="606"/>
    </location>
    <ligand>
        <name>ATP</name>
        <dbReference type="ChEBI" id="CHEBI:30616"/>
    </ligand>
</feature>
<feature type="binding site" evidence="1">
    <location>
        <position position="904"/>
    </location>
    <ligand>
        <name>Zn(2+)</name>
        <dbReference type="ChEBI" id="CHEBI:29105"/>
    </ligand>
</feature>
<feature type="binding site" evidence="1">
    <location>
        <position position="907"/>
    </location>
    <ligand>
        <name>Zn(2+)</name>
        <dbReference type="ChEBI" id="CHEBI:29105"/>
    </ligand>
</feature>
<feature type="binding site" evidence="1">
    <location>
        <position position="924"/>
    </location>
    <ligand>
        <name>Zn(2+)</name>
        <dbReference type="ChEBI" id="CHEBI:29105"/>
    </ligand>
</feature>
<feature type="binding site" evidence="1">
    <location>
        <position position="927"/>
    </location>
    <ligand>
        <name>Zn(2+)</name>
        <dbReference type="ChEBI" id="CHEBI:29105"/>
    </ligand>
</feature>
<name>SYI_HAEIN</name>
<organism>
    <name type="scientific">Haemophilus influenzae (strain ATCC 51907 / DSM 11121 / KW20 / Rd)</name>
    <dbReference type="NCBI Taxonomy" id="71421"/>
    <lineage>
        <taxon>Bacteria</taxon>
        <taxon>Pseudomonadati</taxon>
        <taxon>Pseudomonadota</taxon>
        <taxon>Gammaproteobacteria</taxon>
        <taxon>Pasteurellales</taxon>
        <taxon>Pasteurellaceae</taxon>
        <taxon>Haemophilus</taxon>
    </lineage>
</organism>
<dbReference type="EC" id="6.1.1.5" evidence="1"/>
<dbReference type="EMBL" id="L42023">
    <property type="status" value="NOT_ANNOTATED_CDS"/>
    <property type="molecule type" value="Genomic_DNA"/>
</dbReference>
<dbReference type="PIR" id="S78633">
    <property type="entry name" value="S78633"/>
</dbReference>
<dbReference type="SMR" id="P43824"/>
<dbReference type="Proteomes" id="UP000000579">
    <property type="component" value="Chromosome"/>
</dbReference>
<dbReference type="GO" id="GO:0005829">
    <property type="term" value="C:cytosol"/>
    <property type="evidence" value="ECO:0000318"/>
    <property type="project" value="GO_Central"/>
</dbReference>
<dbReference type="GO" id="GO:0002161">
    <property type="term" value="F:aminoacyl-tRNA deacylase activity"/>
    <property type="evidence" value="ECO:0007669"/>
    <property type="project" value="InterPro"/>
</dbReference>
<dbReference type="GO" id="GO:0005524">
    <property type="term" value="F:ATP binding"/>
    <property type="evidence" value="ECO:0007669"/>
    <property type="project" value="UniProtKB-UniRule"/>
</dbReference>
<dbReference type="GO" id="GO:0004822">
    <property type="term" value="F:isoleucine-tRNA ligase activity"/>
    <property type="evidence" value="ECO:0000318"/>
    <property type="project" value="GO_Central"/>
</dbReference>
<dbReference type="GO" id="GO:0000049">
    <property type="term" value="F:tRNA binding"/>
    <property type="evidence" value="ECO:0007669"/>
    <property type="project" value="InterPro"/>
</dbReference>
<dbReference type="GO" id="GO:0008270">
    <property type="term" value="F:zinc ion binding"/>
    <property type="evidence" value="ECO:0007669"/>
    <property type="project" value="UniProtKB-UniRule"/>
</dbReference>
<dbReference type="GO" id="GO:0006428">
    <property type="term" value="P:isoleucyl-tRNA aminoacylation"/>
    <property type="evidence" value="ECO:0000318"/>
    <property type="project" value="GO_Central"/>
</dbReference>
<dbReference type="CDD" id="cd07960">
    <property type="entry name" value="Anticodon_Ia_Ile_BEm"/>
    <property type="match status" value="1"/>
</dbReference>
<dbReference type="CDD" id="cd00818">
    <property type="entry name" value="IleRS_core"/>
    <property type="match status" value="1"/>
</dbReference>
<dbReference type="FunFam" id="1.10.730.20:FF:000001">
    <property type="entry name" value="Isoleucine--tRNA ligase"/>
    <property type="match status" value="1"/>
</dbReference>
<dbReference type="FunFam" id="3.40.50.620:FF:000042">
    <property type="entry name" value="Isoleucine--tRNA ligase"/>
    <property type="match status" value="1"/>
</dbReference>
<dbReference type="FunFam" id="3.40.50.620:FF:000048">
    <property type="entry name" value="Isoleucine--tRNA ligase"/>
    <property type="match status" value="1"/>
</dbReference>
<dbReference type="FunFam" id="3.90.740.10:FF:000002">
    <property type="entry name" value="Isoleucine--tRNA ligase"/>
    <property type="match status" value="1"/>
</dbReference>
<dbReference type="Gene3D" id="1.10.730.20">
    <property type="match status" value="1"/>
</dbReference>
<dbReference type="Gene3D" id="3.40.50.620">
    <property type="entry name" value="HUPs"/>
    <property type="match status" value="2"/>
</dbReference>
<dbReference type="Gene3D" id="3.90.740.10">
    <property type="entry name" value="Valyl/Leucyl/Isoleucyl-tRNA synthetase, editing domain"/>
    <property type="match status" value="1"/>
</dbReference>
<dbReference type="HAMAP" id="MF_02002">
    <property type="entry name" value="Ile_tRNA_synth_type1"/>
    <property type="match status" value="1"/>
</dbReference>
<dbReference type="InterPro" id="IPR001412">
    <property type="entry name" value="aa-tRNA-synth_I_CS"/>
</dbReference>
<dbReference type="InterPro" id="IPR002300">
    <property type="entry name" value="aa-tRNA-synth_Ia"/>
</dbReference>
<dbReference type="InterPro" id="IPR033708">
    <property type="entry name" value="Anticodon_Ile_BEm"/>
</dbReference>
<dbReference type="InterPro" id="IPR002301">
    <property type="entry name" value="Ile-tRNA-ligase"/>
</dbReference>
<dbReference type="InterPro" id="IPR023585">
    <property type="entry name" value="Ile-tRNA-ligase_type1"/>
</dbReference>
<dbReference type="InterPro" id="IPR050081">
    <property type="entry name" value="Ile-tRNA_ligase"/>
</dbReference>
<dbReference type="InterPro" id="IPR013155">
    <property type="entry name" value="M/V/L/I-tRNA-synth_anticd-bd"/>
</dbReference>
<dbReference type="InterPro" id="IPR014729">
    <property type="entry name" value="Rossmann-like_a/b/a_fold"/>
</dbReference>
<dbReference type="InterPro" id="IPR009080">
    <property type="entry name" value="tRNAsynth_Ia_anticodon-bd"/>
</dbReference>
<dbReference type="InterPro" id="IPR009008">
    <property type="entry name" value="Val/Leu/Ile-tRNA-synth_edit"/>
</dbReference>
<dbReference type="InterPro" id="IPR010663">
    <property type="entry name" value="Znf_FPG/IleRS"/>
</dbReference>
<dbReference type="NCBIfam" id="TIGR00392">
    <property type="entry name" value="ileS"/>
    <property type="match status" value="1"/>
</dbReference>
<dbReference type="PANTHER" id="PTHR42765:SF1">
    <property type="entry name" value="ISOLEUCINE--TRNA LIGASE, MITOCHONDRIAL"/>
    <property type="match status" value="1"/>
</dbReference>
<dbReference type="PANTHER" id="PTHR42765">
    <property type="entry name" value="SOLEUCYL-TRNA SYNTHETASE"/>
    <property type="match status" value="1"/>
</dbReference>
<dbReference type="Pfam" id="PF08264">
    <property type="entry name" value="Anticodon_1"/>
    <property type="match status" value="1"/>
</dbReference>
<dbReference type="Pfam" id="PF00133">
    <property type="entry name" value="tRNA-synt_1"/>
    <property type="match status" value="1"/>
</dbReference>
<dbReference type="Pfam" id="PF06827">
    <property type="entry name" value="zf-FPG_IleRS"/>
    <property type="match status" value="1"/>
</dbReference>
<dbReference type="PRINTS" id="PR00984">
    <property type="entry name" value="TRNASYNTHILE"/>
</dbReference>
<dbReference type="SUPFAM" id="SSF47323">
    <property type="entry name" value="Anticodon-binding domain of a subclass of class I aminoacyl-tRNA synthetases"/>
    <property type="match status" value="1"/>
</dbReference>
<dbReference type="SUPFAM" id="SSF52374">
    <property type="entry name" value="Nucleotidylyl transferase"/>
    <property type="match status" value="1"/>
</dbReference>
<dbReference type="SUPFAM" id="SSF50677">
    <property type="entry name" value="ValRS/IleRS/LeuRS editing domain"/>
    <property type="match status" value="1"/>
</dbReference>
<dbReference type="PROSITE" id="PS00178">
    <property type="entry name" value="AA_TRNA_LIGASE_I"/>
    <property type="match status" value="1"/>
</dbReference>
<keyword id="KW-0030">Aminoacyl-tRNA synthetase</keyword>
<keyword id="KW-0067">ATP-binding</keyword>
<keyword id="KW-0963">Cytoplasm</keyword>
<keyword id="KW-0436">Ligase</keyword>
<keyword id="KW-0479">Metal-binding</keyword>
<keyword id="KW-0547">Nucleotide-binding</keyword>
<keyword id="KW-0648">Protein biosynthesis</keyword>
<keyword id="KW-1185">Reference proteome</keyword>
<keyword id="KW-0862">Zinc</keyword>
<evidence type="ECO:0000255" key="1">
    <source>
        <dbReference type="HAMAP-Rule" id="MF_02002"/>
    </source>
</evidence>
<evidence type="ECO:0000305" key="2"/>
<protein>
    <recommendedName>
        <fullName evidence="1">Isoleucine--tRNA ligase</fullName>
        <ecNumber evidence="1">6.1.1.5</ecNumber>
    </recommendedName>
    <alternativeName>
        <fullName evidence="1">Isoleucyl-tRNA synthetase</fullName>
        <shortName evidence="1">IleRS</shortName>
    </alternativeName>
</protein>
<proteinExistence type="inferred from homology"/>
<reference key="1">
    <citation type="journal article" date="1995" name="Science">
        <title>Whole-genome random sequencing and assembly of Haemophilus influenzae Rd.</title>
        <authorList>
            <person name="Fleischmann R.D."/>
            <person name="Adams M.D."/>
            <person name="White O."/>
            <person name="Clayton R.A."/>
            <person name="Kirkness E.F."/>
            <person name="Kerlavage A.R."/>
            <person name="Bult C.J."/>
            <person name="Tomb J.-F."/>
            <person name="Dougherty B.A."/>
            <person name="Merrick J.M."/>
            <person name="McKenney K."/>
            <person name="Sutton G.G."/>
            <person name="FitzHugh W."/>
            <person name="Fields C.A."/>
            <person name="Gocayne J.D."/>
            <person name="Scott J.D."/>
            <person name="Shirley R."/>
            <person name="Liu L.-I."/>
            <person name="Glodek A."/>
            <person name="Kelley J.M."/>
            <person name="Weidman J.F."/>
            <person name="Phillips C.A."/>
            <person name="Spriggs T."/>
            <person name="Hedblom E."/>
            <person name="Cotton M.D."/>
            <person name="Utterback T.R."/>
            <person name="Hanna M.C."/>
            <person name="Nguyen D.T."/>
            <person name="Saudek D.M."/>
            <person name="Brandon R.C."/>
            <person name="Fine L.D."/>
            <person name="Fritchman J.L."/>
            <person name="Fuhrmann J.L."/>
            <person name="Geoghagen N.S.M."/>
            <person name="Gnehm C.L."/>
            <person name="McDonald L.A."/>
            <person name="Small K.V."/>
            <person name="Fraser C.M."/>
            <person name="Smith H.O."/>
            <person name="Venter J.C."/>
        </authorList>
    </citation>
    <scope>NUCLEOTIDE SEQUENCE [LARGE SCALE GENOMIC DNA]</scope>
    <source>
        <strain>ATCC 51907 / DSM 11121 / KW20 / Rd</strain>
    </source>
</reference>
<comment type="function">
    <text evidence="1">Catalyzes the attachment of isoleucine to tRNA(Ile). As IleRS can inadvertently accommodate and process structurally similar amino acids such as valine, to avoid such errors it has two additional distinct tRNA(Ile)-dependent editing activities. One activity is designated as 'pretransfer' editing and involves the hydrolysis of activated Val-AMP. The other activity is designated 'posttransfer' editing and involves deacylation of mischarged Val-tRNA(Ile).</text>
</comment>
<comment type="catalytic activity">
    <reaction evidence="1">
        <text>tRNA(Ile) + L-isoleucine + ATP = L-isoleucyl-tRNA(Ile) + AMP + diphosphate</text>
        <dbReference type="Rhea" id="RHEA:11060"/>
        <dbReference type="Rhea" id="RHEA-COMP:9666"/>
        <dbReference type="Rhea" id="RHEA-COMP:9695"/>
        <dbReference type="ChEBI" id="CHEBI:30616"/>
        <dbReference type="ChEBI" id="CHEBI:33019"/>
        <dbReference type="ChEBI" id="CHEBI:58045"/>
        <dbReference type="ChEBI" id="CHEBI:78442"/>
        <dbReference type="ChEBI" id="CHEBI:78528"/>
        <dbReference type="ChEBI" id="CHEBI:456215"/>
        <dbReference type="EC" id="6.1.1.5"/>
    </reaction>
</comment>
<comment type="cofactor">
    <cofactor evidence="1">
        <name>Zn(2+)</name>
        <dbReference type="ChEBI" id="CHEBI:29105"/>
    </cofactor>
    <text evidence="1">Binds 1 zinc ion per subunit.</text>
</comment>
<comment type="subunit">
    <text evidence="1">Monomer.</text>
</comment>
<comment type="subcellular location">
    <subcellularLocation>
        <location evidence="1">Cytoplasm</location>
    </subcellularLocation>
</comment>
<comment type="domain">
    <text evidence="1">IleRS has two distinct active sites: one for aminoacylation and one for editing. The misactivated valine is translocated from the active site to the editing site, which sterically excludes the correctly activated isoleucine. The single editing site contains two valyl binding pockets, one specific for each substrate (Val-AMP or Val-tRNA(Ile)).</text>
</comment>
<comment type="similarity">
    <text evidence="1">Belongs to the class-I aminoacyl-tRNA synthetase family. IleS type 1 subfamily.</text>
</comment>
<comment type="sequence caution" evidence="2">
    <conflict type="erroneous termination">
        <sequence resource="EMBL" id="L42023"/>
    </conflict>
    <text>Truncated C-terminus.</text>
</comment>
<gene>
    <name evidence="1" type="primary">ileS</name>
    <name type="ordered locus">HI_0962</name>
</gene>
<sequence>MTVDYKNTLNLPETSFPMRGDLAKREPDKLKNWYEKNLYQKIRKASKGKKSFILHDGPPYANGNIHIGHAVNKILKDIIIKSKTALGFDSPYIPGWDCHGLPIELKVEGLVGKPNEKISAAEFRQKCREYAAEQVEGQKKDFIRLGVLGDWDNPYLTMNFDTEANIIRTLGKVIENGHLYKGSKPVHWCLDCGSSLAEAEVEYEDKVSPSIYVRFPAESADEIEAKFSAQGRGQGKLSAIIWTTTPWTMPSNRAIAVNADLEYNLVQLGDERVILAAELVESVAKAVGIEHIEILGSVKGDDLELSRFHHPFYDFTVPVILGDHVTTDGGTGLVHTAPDHGLDDFIVGKQYDLPMAGLVSNDGKFISTTEFFAGKGVFEANPLVIEKLQEVGNLLKVEKIKHSYPHCWRHKTPIIFRATPQWFIGMETQGLRQQALGEIKQVRWIPDWGQARIEKMVENRPDWCISRQRTWGVPMTLFVHKETEELHPRTLDLLEEVAKRVERAGIQAWWDLDEKELLGADAETYRKVPDTLDVWFDSGSTYSSVVANRLEFNGQDIDMYLEGSDQHRGWFMSSLMLSTATDSKAPYKQVLTHGFTVDGQGRKMSKSIGNIVTPQEVMDKFGGDILRLWVASTDYTGEMTVSDEILKRAADSYRRIRNTARFLLANLNGFDPKRDLVKPEKMISLDRWAVACALDAQNEIKDAYDNYQFHTVVQRLMRFCSVEMGSFYLDIIKDRQYTTKADSLARRSCQTALWHIAEALVRWMAPILSFTADEIWQHLPQTESARAEFVFTEEFYQGLFGLGEDEKLDDAYWQQLIKVRSEVNRVLEISRNNKEIGGGLEAEVTVYANDEYRALLAQLGNELRFVLITSKVDVKSLSEKPADLADSELEGIAVSVTRSNAEKCPRCWHYSDEIGVSPEHPTLCARCVENVVGNGEVRYFA</sequence>